<accession>Q5SHB3</accession>
<gene>
    <name evidence="1" type="primary">rny</name>
    <name type="ordered locus">TTHA1817</name>
</gene>
<protein>
    <recommendedName>
        <fullName evidence="1">Ribonuclease Y</fullName>
        <shortName evidence="1">RNase Y</shortName>
        <ecNumber evidence="1">3.1.-.-</ecNumber>
    </recommendedName>
</protein>
<feature type="chain" id="PRO_0000344969" description="Ribonuclease Y">
    <location>
        <begin position="1"/>
        <end position="574"/>
    </location>
</feature>
<feature type="transmembrane region" description="Helical" evidence="1">
    <location>
        <begin position="1"/>
        <end position="21"/>
    </location>
</feature>
<feature type="domain" description="KH" evidence="1">
    <location>
        <begin position="264"/>
        <end position="327"/>
    </location>
</feature>
<feature type="domain" description="HD" evidence="2">
    <location>
        <begin position="390"/>
        <end position="483"/>
    </location>
</feature>
<name>RNY_THET8</name>
<evidence type="ECO:0000255" key="1">
    <source>
        <dbReference type="HAMAP-Rule" id="MF_00335"/>
    </source>
</evidence>
<evidence type="ECO:0000255" key="2">
    <source>
        <dbReference type="PROSITE-ProRule" id="PRU01175"/>
    </source>
</evidence>
<proteinExistence type="inferred from homology"/>
<dbReference type="EC" id="3.1.-.-" evidence="1"/>
<dbReference type="EMBL" id="AP008226">
    <property type="protein sequence ID" value="BAD71640.1"/>
    <property type="molecule type" value="Genomic_DNA"/>
</dbReference>
<dbReference type="RefSeq" id="WP_011228936.1">
    <property type="nucleotide sequence ID" value="NC_006461.1"/>
</dbReference>
<dbReference type="RefSeq" id="YP_145083.1">
    <property type="nucleotide sequence ID" value="NC_006461.1"/>
</dbReference>
<dbReference type="SMR" id="Q5SHB3"/>
<dbReference type="EnsemblBacteria" id="BAD71640">
    <property type="protein sequence ID" value="BAD71640"/>
    <property type="gene ID" value="BAD71640"/>
</dbReference>
<dbReference type="GeneID" id="3168506"/>
<dbReference type="KEGG" id="ttj:TTHA1817"/>
<dbReference type="PATRIC" id="fig|300852.9.peg.1788"/>
<dbReference type="eggNOG" id="COG0711">
    <property type="taxonomic scope" value="Bacteria"/>
</dbReference>
<dbReference type="eggNOG" id="COG1418">
    <property type="taxonomic scope" value="Bacteria"/>
</dbReference>
<dbReference type="HOGENOM" id="CLU_028328_1_0_0"/>
<dbReference type="PhylomeDB" id="Q5SHB3"/>
<dbReference type="Proteomes" id="UP000000532">
    <property type="component" value="Chromosome"/>
</dbReference>
<dbReference type="GO" id="GO:0005886">
    <property type="term" value="C:plasma membrane"/>
    <property type="evidence" value="ECO:0007669"/>
    <property type="project" value="UniProtKB-SubCell"/>
</dbReference>
<dbReference type="GO" id="GO:0003723">
    <property type="term" value="F:RNA binding"/>
    <property type="evidence" value="ECO:0007669"/>
    <property type="project" value="UniProtKB-UniRule"/>
</dbReference>
<dbReference type="GO" id="GO:0004521">
    <property type="term" value="F:RNA endonuclease activity"/>
    <property type="evidence" value="ECO:0007669"/>
    <property type="project" value="UniProtKB-UniRule"/>
</dbReference>
<dbReference type="GO" id="GO:0006402">
    <property type="term" value="P:mRNA catabolic process"/>
    <property type="evidence" value="ECO:0007669"/>
    <property type="project" value="UniProtKB-UniRule"/>
</dbReference>
<dbReference type="CDD" id="cd06503">
    <property type="entry name" value="ATP-synt_Fo_b"/>
    <property type="match status" value="1"/>
</dbReference>
<dbReference type="CDD" id="cd00077">
    <property type="entry name" value="HDc"/>
    <property type="match status" value="1"/>
</dbReference>
<dbReference type="CDD" id="cd22431">
    <property type="entry name" value="KH-I_RNaseY"/>
    <property type="match status" value="1"/>
</dbReference>
<dbReference type="FunFam" id="1.10.3210.10:FF:000022">
    <property type="entry name" value="Ribonuclease Y"/>
    <property type="match status" value="1"/>
</dbReference>
<dbReference type="Gene3D" id="1.20.5.2950">
    <property type="match status" value="1"/>
</dbReference>
<dbReference type="Gene3D" id="1.10.3210.10">
    <property type="entry name" value="Hypothetical protein af1432"/>
    <property type="match status" value="1"/>
</dbReference>
<dbReference type="Gene3D" id="3.30.1370.10">
    <property type="entry name" value="K Homology domain, type 1"/>
    <property type="match status" value="1"/>
</dbReference>
<dbReference type="HAMAP" id="MF_00335">
    <property type="entry name" value="RNase_Y"/>
    <property type="match status" value="1"/>
</dbReference>
<dbReference type="InterPro" id="IPR003607">
    <property type="entry name" value="HD/PDEase_dom"/>
</dbReference>
<dbReference type="InterPro" id="IPR006674">
    <property type="entry name" value="HD_domain"/>
</dbReference>
<dbReference type="InterPro" id="IPR006675">
    <property type="entry name" value="HDIG_dom"/>
</dbReference>
<dbReference type="InterPro" id="IPR004087">
    <property type="entry name" value="KH_dom"/>
</dbReference>
<dbReference type="InterPro" id="IPR004088">
    <property type="entry name" value="KH_dom_type_1"/>
</dbReference>
<dbReference type="InterPro" id="IPR036612">
    <property type="entry name" value="KH_dom_type_1_sf"/>
</dbReference>
<dbReference type="InterPro" id="IPR017705">
    <property type="entry name" value="Ribonuclease_Y"/>
</dbReference>
<dbReference type="InterPro" id="IPR022711">
    <property type="entry name" value="RNase_Y_N"/>
</dbReference>
<dbReference type="NCBIfam" id="TIGR00277">
    <property type="entry name" value="HDIG"/>
    <property type="match status" value="1"/>
</dbReference>
<dbReference type="NCBIfam" id="NF009344">
    <property type="entry name" value="PRK12705.1-1"/>
    <property type="match status" value="1"/>
</dbReference>
<dbReference type="NCBIfam" id="TIGR03319">
    <property type="entry name" value="RNase_Y"/>
    <property type="match status" value="1"/>
</dbReference>
<dbReference type="PANTHER" id="PTHR12826">
    <property type="entry name" value="RIBONUCLEASE Y"/>
    <property type="match status" value="1"/>
</dbReference>
<dbReference type="PANTHER" id="PTHR12826:SF15">
    <property type="entry name" value="RIBONUCLEASE Y"/>
    <property type="match status" value="1"/>
</dbReference>
<dbReference type="Pfam" id="PF01966">
    <property type="entry name" value="HD"/>
    <property type="match status" value="1"/>
</dbReference>
<dbReference type="Pfam" id="PF00013">
    <property type="entry name" value="KH_1"/>
    <property type="match status" value="1"/>
</dbReference>
<dbReference type="Pfam" id="PF12072">
    <property type="entry name" value="RNase_Y_N"/>
    <property type="match status" value="1"/>
</dbReference>
<dbReference type="SMART" id="SM00471">
    <property type="entry name" value="HDc"/>
    <property type="match status" value="1"/>
</dbReference>
<dbReference type="SMART" id="SM00322">
    <property type="entry name" value="KH"/>
    <property type="match status" value="1"/>
</dbReference>
<dbReference type="SUPFAM" id="SSF54791">
    <property type="entry name" value="Eukaryotic type KH-domain (KH-domain type I)"/>
    <property type="match status" value="1"/>
</dbReference>
<dbReference type="SUPFAM" id="SSF109604">
    <property type="entry name" value="HD-domain/PDEase-like"/>
    <property type="match status" value="1"/>
</dbReference>
<dbReference type="PROSITE" id="PS51831">
    <property type="entry name" value="HD"/>
    <property type="match status" value="1"/>
</dbReference>
<dbReference type="PROSITE" id="PS50084">
    <property type="entry name" value="KH_TYPE_1"/>
    <property type="match status" value="1"/>
</dbReference>
<comment type="function">
    <text evidence="1">Endoribonuclease that initiates mRNA decay.</text>
</comment>
<comment type="subcellular location">
    <subcellularLocation>
        <location evidence="1">Cell membrane</location>
        <topology evidence="1">Single-pass membrane protein</topology>
    </subcellularLocation>
</comment>
<comment type="similarity">
    <text evidence="1">Belongs to the RNase Y family.</text>
</comment>
<reference key="1">
    <citation type="submission" date="2004-11" db="EMBL/GenBank/DDBJ databases">
        <title>Complete genome sequence of Thermus thermophilus HB8.</title>
        <authorList>
            <person name="Masui R."/>
            <person name="Kurokawa K."/>
            <person name="Nakagawa N."/>
            <person name="Tokunaga F."/>
            <person name="Koyama Y."/>
            <person name="Shibata T."/>
            <person name="Oshima T."/>
            <person name="Yokoyama S."/>
            <person name="Yasunaga T."/>
            <person name="Kuramitsu S."/>
        </authorList>
    </citation>
    <scope>NUCLEOTIDE SEQUENCE [LARGE SCALE GENOMIC DNA]</scope>
    <source>
        <strain>ATCC 27634 / DSM 579 / HB8</strain>
    </source>
</reference>
<sequence length="574" mass="64577">MSLLDLVLLLLVLGLGGVLLLRRKGEDRSAQEARELLEAARREAREVLEAARKEARDILEAARQEAKALRQEAEARAKAQREEVEAELRRRLEAAEAEAKKRLEEAGERLKAEREELRAERERLRSLQEELKEERERLKAEREELRREGERLAKRAEALDARAARLEEAEAELVRKEEALKAEARALEERLKEVERRLYEVAGLTPEEARRLVLERLDRELEEEKAQRVRAALERARLEARREAQKILAQAMQRQASETAAQLAVTVVPIPSDAMKGRIIGREGRNIRAFEALTGVDLIIDDTPDAVLLSSFNPIRREIARMALEELLKDGRIHPSRIEEVVEKAKQEMKTFIYERGEEAALEAGVVGLKPGLIQLLGRLHFRSSYGQNVLKHSIQVAHLAGIMAAELGLDAALARRAGLLHDIGKSVDREVEGSHVEIGIALARRFGEPKEVVDAIAHHHDPDNAETLYAVLVAAADALSAARPGARRESLEEYLQRLEALERIALSFPGVETAFAVQAGREVRVIVKPEKISDAKATLLAREIASRIEKEMNYPGQVQVTVVRETRAVEYAR</sequence>
<organism>
    <name type="scientific">Thermus thermophilus (strain ATCC 27634 / DSM 579 / HB8)</name>
    <dbReference type="NCBI Taxonomy" id="300852"/>
    <lineage>
        <taxon>Bacteria</taxon>
        <taxon>Thermotogati</taxon>
        <taxon>Deinococcota</taxon>
        <taxon>Deinococci</taxon>
        <taxon>Thermales</taxon>
        <taxon>Thermaceae</taxon>
        <taxon>Thermus</taxon>
    </lineage>
</organism>
<keyword id="KW-1003">Cell membrane</keyword>
<keyword id="KW-0255">Endonuclease</keyword>
<keyword id="KW-0378">Hydrolase</keyword>
<keyword id="KW-0472">Membrane</keyword>
<keyword id="KW-0540">Nuclease</keyword>
<keyword id="KW-1185">Reference proteome</keyword>
<keyword id="KW-0694">RNA-binding</keyword>
<keyword id="KW-0812">Transmembrane</keyword>
<keyword id="KW-1133">Transmembrane helix</keyword>